<proteinExistence type="evidence at protein level"/>
<feature type="chain" id="PRO_0000254098" description="RIB43A-like with coiled-coils protein 2">
    <location>
        <begin position="1"/>
        <end position="382"/>
    </location>
</feature>
<feature type="coiled-coil region" evidence="2">
    <location>
        <begin position="222"/>
        <end position="255"/>
    </location>
</feature>
<feature type="sequence variant" id="VAR_028812" description="In dbSNP:rs2142661.">
    <original>R</original>
    <variation>C</variation>
    <location>
        <position position="253"/>
    </location>
</feature>
<feature type="sequence variant" id="VAR_028813" description="In dbSNP:rs1022478." evidence="3 4">
    <original>F</original>
    <variation>L</variation>
    <location>
        <position position="268"/>
    </location>
</feature>
<feature type="sequence variant" id="VAR_028814" description="In dbSNP:rs2072770." evidence="3 4">
    <original>R</original>
    <variation>Q</variation>
    <location>
        <position position="335"/>
    </location>
</feature>
<reference key="1">
    <citation type="journal article" date="2003" name="Genome Res.">
        <title>Reevaluating human gene annotation: a second-generation analysis of chromosome 22.</title>
        <authorList>
            <person name="Collins J.E."/>
            <person name="Goward M.E."/>
            <person name="Cole C.G."/>
            <person name="Smink L.J."/>
            <person name="Huckle E.J."/>
            <person name="Knowles S."/>
            <person name="Bye J.M."/>
            <person name="Beare D.M."/>
            <person name="Dunham I."/>
        </authorList>
    </citation>
    <scope>NUCLEOTIDE SEQUENCE [LARGE SCALE MRNA]</scope>
</reference>
<reference key="2">
    <citation type="journal article" date="1999" name="Nature">
        <title>The DNA sequence of human chromosome 22.</title>
        <authorList>
            <person name="Dunham I."/>
            <person name="Hunt A.R."/>
            <person name="Collins J.E."/>
            <person name="Bruskiewich R."/>
            <person name="Beare D.M."/>
            <person name="Clamp M."/>
            <person name="Smink L.J."/>
            <person name="Ainscough R."/>
            <person name="Almeida J.P."/>
            <person name="Babbage A.K."/>
            <person name="Bagguley C."/>
            <person name="Bailey J."/>
            <person name="Barlow K.F."/>
            <person name="Bates K.N."/>
            <person name="Beasley O.P."/>
            <person name="Bird C.P."/>
            <person name="Blakey S.E."/>
            <person name="Bridgeman A.M."/>
            <person name="Buck D."/>
            <person name="Burgess J."/>
            <person name="Burrill W.D."/>
            <person name="Burton J."/>
            <person name="Carder C."/>
            <person name="Carter N.P."/>
            <person name="Chen Y."/>
            <person name="Clark G."/>
            <person name="Clegg S.M."/>
            <person name="Cobley V.E."/>
            <person name="Cole C.G."/>
            <person name="Collier R.E."/>
            <person name="Connor R."/>
            <person name="Conroy D."/>
            <person name="Corby N.R."/>
            <person name="Coville G.J."/>
            <person name="Cox A.V."/>
            <person name="Davis J."/>
            <person name="Dawson E."/>
            <person name="Dhami P.D."/>
            <person name="Dockree C."/>
            <person name="Dodsworth S.J."/>
            <person name="Durbin R.M."/>
            <person name="Ellington A.G."/>
            <person name="Evans K.L."/>
            <person name="Fey J.M."/>
            <person name="Fleming K."/>
            <person name="French L."/>
            <person name="Garner A.A."/>
            <person name="Gilbert J.G.R."/>
            <person name="Goward M.E."/>
            <person name="Grafham D.V."/>
            <person name="Griffiths M.N.D."/>
            <person name="Hall C."/>
            <person name="Hall R.E."/>
            <person name="Hall-Tamlyn G."/>
            <person name="Heathcott R.W."/>
            <person name="Ho S."/>
            <person name="Holmes S."/>
            <person name="Hunt S.E."/>
            <person name="Jones M.C."/>
            <person name="Kershaw J."/>
            <person name="Kimberley A.M."/>
            <person name="King A."/>
            <person name="Laird G.K."/>
            <person name="Langford C.F."/>
            <person name="Leversha M.A."/>
            <person name="Lloyd C."/>
            <person name="Lloyd D.M."/>
            <person name="Martyn I.D."/>
            <person name="Mashreghi-Mohammadi M."/>
            <person name="Matthews L.H."/>
            <person name="Mccann O.T."/>
            <person name="Mcclay J."/>
            <person name="Mclaren S."/>
            <person name="McMurray A.A."/>
            <person name="Milne S.A."/>
            <person name="Mortimore B.J."/>
            <person name="Odell C.N."/>
            <person name="Pavitt R."/>
            <person name="Pearce A.V."/>
            <person name="Pearson D."/>
            <person name="Phillimore B.J.C.T."/>
            <person name="Phillips S.H."/>
            <person name="Plumb R.W."/>
            <person name="Ramsay H."/>
            <person name="Ramsey Y."/>
            <person name="Rogers L."/>
            <person name="Ross M.T."/>
            <person name="Scott C.E."/>
            <person name="Sehra H.K."/>
            <person name="Skuce C.D."/>
            <person name="Smalley S."/>
            <person name="Smith M.L."/>
            <person name="Soderlund C."/>
            <person name="Spragon L."/>
            <person name="Steward C.A."/>
            <person name="Sulston J.E."/>
            <person name="Swann R.M."/>
            <person name="Vaudin M."/>
            <person name="Wall M."/>
            <person name="Wallis J.M."/>
            <person name="Whiteley M.N."/>
            <person name="Willey D.L."/>
            <person name="Williams L."/>
            <person name="Williams S.A."/>
            <person name="Williamson H."/>
            <person name="Wilmer T.E."/>
            <person name="Wilming L."/>
            <person name="Wright C.L."/>
            <person name="Hubbard T."/>
            <person name="Bentley D.R."/>
            <person name="Beck S."/>
            <person name="Rogers J."/>
            <person name="Shimizu N."/>
            <person name="Minoshima S."/>
            <person name="Kawasaki K."/>
            <person name="Sasaki T."/>
            <person name="Asakawa S."/>
            <person name="Kudoh J."/>
            <person name="Shintani A."/>
            <person name="Shibuya K."/>
            <person name="Yoshizaki Y."/>
            <person name="Aoki N."/>
            <person name="Mitsuyama S."/>
            <person name="Roe B.A."/>
            <person name="Chen F."/>
            <person name="Chu L."/>
            <person name="Crabtree J."/>
            <person name="Deschamps S."/>
            <person name="Do A."/>
            <person name="Do T."/>
            <person name="Dorman A."/>
            <person name="Fang F."/>
            <person name="Fu Y."/>
            <person name="Hu P."/>
            <person name="Hua A."/>
            <person name="Kenton S."/>
            <person name="Lai H."/>
            <person name="Lao H.I."/>
            <person name="Lewis J."/>
            <person name="Lewis S."/>
            <person name="Lin S.-P."/>
            <person name="Loh P."/>
            <person name="Malaj E."/>
            <person name="Nguyen T."/>
            <person name="Pan H."/>
            <person name="Phan S."/>
            <person name="Qi S."/>
            <person name="Qian Y."/>
            <person name="Ray L."/>
            <person name="Ren Q."/>
            <person name="Shaull S."/>
            <person name="Sloan D."/>
            <person name="Song L."/>
            <person name="Wang Q."/>
            <person name="Wang Y."/>
            <person name="Wang Z."/>
            <person name="White J."/>
            <person name="Willingham D."/>
            <person name="Wu H."/>
            <person name="Yao Z."/>
            <person name="Zhan M."/>
            <person name="Zhang G."/>
            <person name="Chissoe S."/>
            <person name="Murray J."/>
            <person name="Miller N."/>
            <person name="Minx P."/>
            <person name="Fulton R."/>
            <person name="Johnson D."/>
            <person name="Bemis G."/>
            <person name="Bentley D."/>
            <person name="Bradshaw H."/>
            <person name="Bourne S."/>
            <person name="Cordes M."/>
            <person name="Du Z."/>
            <person name="Fulton L."/>
            <person name="Goela D."/>
            <person name="Graves T."/>
            <person name="Hawkins J."/>
            <person name="Hinds K."/>
            <person name="Kemp K."/>
            <person name="Latreille P."/>
            <person name="Layman D."/>
            <person name="Ozersky P."/>
            <person name="Rohlfing T."/>
            <person name="Scheet P."/>
            <person name="Walker C."/>
            <person name="Wamsley A."/>
            <person name="Wohldmann P."/>
            <person name="Pepin K."/>
            <person name="Nelson J."/>
            <person name="Korf I."/>
            <person name="Bedell J.A."/>
            <person name="Hillier L.W."/>
            <person name="Mardis E."/>
            <person name="Waterston R."/>
            <person name="Wilson R."/>
            <person name="Emanuel B.S."/>
            <person name="Shaikh T."/>
            <person name="Kurahashi H."/>
            <person name="Saitta S."/>
            <person name="Budarf M.L."/>
            <person name="McDermid H.E."/>
            <person name="Johnson A."/>
            <person name="Wong A.C.C."/>
            <person name="Morrow B.E."/>
            <person name="Edelmann L."/>
            <person name="Kim U.J."/>
            <person name="Shizuya H."/>
            <person name="Simon M.I."/>
            <person name="Dumanski J.P."/>
            <person name="Peyrard M."/>
            <person name="Kedra D."/>
            <person name="Seroussi E."/>
            <person name="Fransson I."/>
            <person name="Tapia I."/>
            <person name="Bruder C.E."/>
            <person name="O'Brien K.P."/>
            <person name="Wilkinson P."/>
            <person name="Bodenteich A."/>
            <person name="Hartman K."/>
            <person name="Hu X."/>
            <person name="Khan A.S."/>
            <person name="Lane L."/>
            <person name="Tilahun Y."/>
            <person name="Wright H."/>
        </authorList>
    </citation>
    <scope>NUCLEOTIDE SEQUENCE [LARGE SCALE GENOMIC DNA]</scope>
</reference>
<reference key="3">
    <citation type="submission" date="2014-09" db="EMBL/GenBank/DDBJ databases">
        <authorList>
            <person name="Mural R.J."/>
            <person name="Istrail S."/>
            <person name="Sutton G.G."/>
            <person name="Florea L."/>
            <person name="Halpern A.L."/>
            <person name="Mobarry C.M."/>
            <person name="Lippert R."/>
            <person name="Walenz B."/>
            <person name="Shatkay H."/>
            <person name="Dew I."/>
            <person name="Miller J.R."/>
            <person name="Flanigan M.J."/>
            <person name="Edwards N.J."/>
            <person name="Bolanos R."/>
            <person name="Fasulo D."/>
            <person name="Halldorsson B.V."/>
            <person name="Hannenhalli S."/>
            <person name="Turner R."/>
            <person name="Yooseph S."/>
            <person name="Lu F."/>
            <person name="Nusskern D.R."/>
            <person name="Shue B.C."/>
            <person name="Zheng X.H."/>
            <person name="Zhong F."/>
            <person name="Delcher A.L."/>
            <person name="Huson D.H."/>
            <person name="Kravitz S.A."/>
            <person name="Mouchard L."/>
            <person name="Reinert K."/>
            <person name="Remington K.A."/>
            <person name="Clark A.G."/>
            <person name="Waterman M.S."/>
            <person name="Eichler E.E."/>
            <person name="Adams M.D."/>
            <person name="Hunkapiller M.W."/>
            <person name="Myers E.W."/>
            <person name="Venter J.C."/>
        </authorList>
    </citation>
    <scope>NUCLEOTIDE SEQUENCE [LARGE SCALE GENOMIC DNA]</scope>
</reference>
<reference key="4">
    <citation type="journal article" date="2004" name="Genome Res.">
        <title>The status, quality, and expansion of the NIH full-length cDNA project: the Mammalian Gene Collection (MGC).</title>
        <authorList>
            <consortium name="The MGC Project Team"/>
        </authorList>
    </citation>
    <scope>NUCLEOTIDE SEQUENCE [LARGE SCALE MRNA]</scope>
    <source>
        <tissue>Lung</tissue>
    </source>
</reference>
<reference key="5">
    <citation type="journal article" date="2004" name="Genome Biol.">
        <title>A genome annotation-driven approach to cloning the human ORFeome.</title>
        <authorList>
            <person name="Collins J.E."/>
            <person name="Wright C.L."/>
            <person name="Edwards C.A."/>
            <person name="Davis M.P."/>
            <person name="Grinham J.A."/>
            <person name="Cole C.G."/>
            <person name="Goward M.E."/>
            <person name="Aguado B."/>
            <person name="Mallya M."/>
            <person name="Mokrab Y."/>
            <person name="Huckle E.J."/>
            <person name="Beare D.M."/>
            <person name="Dunham I."/>
        </authorList>
    </citation>
    <scope>NUCLEOTIDE SEQUENCE [LARGE SCALE MRNA] OF 71-382</scope>
    <scope>VARIANTS LEU-268 AND GLN-335</scope>
</reference>
<reference key="6">
    <citation type="submission" date="2004-06" db="EMBL/GenBank/DDBJ databases">
        <title>Cloning of human full open reading frames in Gateway(TM) system entry vector (pDONR201).</title>
        <authorList>
            <person name="Ebert L."/>
            <person name="Schick M."/>
            <person name="Neubert P."/>
            <person name="Schatten R."/>
            <person name="Henze S."/>
            <person name="Korn B."/>
        </authorList>
    </citation>
    <scope>NUCLEOTIDE SEQUENCE [LARGE SCALE MRNA] OF 74-382</scope>
</reference>
<reference key="7">
    <citation type="journal article" date="2007" name="BMC Genomics">
        <title>The full-ORF clone resource of the German cDNA consortium.</title>
        <authorList>
            <person name="Bechtel S."/>
            <person name="Rosenfelder H."/>
            <person name="Duda A."/>
            <person name="Schmidt C.P."/>
            <person name="Ernst U."/>
            <person name="Wellenreuther R."/>
            <person name="Mehrle A."/>
            <person name="Schuster C."/>
            <person name="Bahr A."/>
            <person name="Bloecker H."/>
            <person name="Heubner D."/>
            <person name="Hoerlein A."/>
            <person name="Michel G."/>
            <person name="Wedler H."/>
            <person name="Koehrer K."/>
            <person name="Ottenwaelder B."/>
            <person name="Poustka A."/>
            <person name="Wiemann S."/>
            <person name="Schupp I."/>
        </authorList>
    </citation>
    <scope>NUCLEOTIDE SEQUENCE [LARGE SCALE MRNA] OF 233-382</scope>
    <scope>VARIANTS LEU-268 AND GLN-335</scope>
    <source>
        <tissue>Kidney</tissue>
    </source>
</reference>
<reference evidence="8" key="8">
    <citation type="journal article" date="2022" name="Proc. Natl. Acad. Sci. U.S.A.">
        <title>SPACA9 is a lumenal protein of human ciliary singlet and doublet microtubules.</title>
        <authorList>
            <person name="Gui M."/>
            <person name="Croft J.T."/>
            <person name="Zabeo D."/>
            <person name="Acharya V."/>
            <person name="Kollman J.M."/>
            <person name="Burgoyne T."/>
            <person name="Hoog J.L."/>
            <person name="Brown A."/>
        </authorList>
    </citation>
    <scope>STRUCTURE BY ELECTRON MICROSCOPY (3.60 ANGSTROMS)</scope>
    <scope>FUNCTION</scope>
    <scope>SUBCELLULAR LOCATION</scope>
    <scope>TISSUE SPECIFICITY</scope>
</reference>
<accession>Q9H4K1</accession>
<accession>A0A087X0F7</accession>
<accession>Q6ICD0</accession>
<accession>Q9Y413</accession>
<protein>
    <recommendedName>
        <fullName evidence="6">RIB43A-like with coiled-coils protein 2</fullName>
    </recommendedName>
</protein>
<dbReference type="EMBL" id="AL442116">
    <property type="protein sequence ID" value="CAC09526.1"/>
    <property type="status" value="ALT_SEQ"/>
    <property type="molecule type" value="mRNA"/>
</dbReference>
<dbReference type="EMBL" id="AL021391">
    <property type="status" value="NOT_ANNOTATED_CDS"/>
    <property type="molecule type" value="Genomic_DNA"/>
</dbReference>
<dbReference type="EMBL" id="CH471138">
    <property type="protein sequence ID" value="EAW73384.1"/>
    <property type="molecule type" value="Genomic_DNA"/>
</dbReference>
<dbReference type="EMBL" id="BC003024">
    <property type="protein sequence ID" value="AAH03024.1"/>
    <property type="status" value="ALT_INIT"/>
    <property type="molecule type" value="mRNA"/>
</dbReference>
<dbReference type="EMBL" id="BC009904">
    <property type="protein sequence ID" value="AAH09904.1"/>
    <property type="status" value="ALT_INIT"/>
    <property type="molecule type" value="mRNA"/>
</dbReference>
<dbReference type="EMBL" id="CR456438">
    <property type="protein sequence ID" value="CAG30324.1"/>
    <property type="status" value="ALT_INIT"/>
    <property type="molecule type" value="mRNA"/>
</dbReference>
<dbReference type="EMBL" id="CR457398">
    <property type="protein sequence ID" value="CAG33679.1"/>
    <property type="molecule type" value="mRNA"/>
</dbReference>
<dbReference type="EMBL" id="AL050075">
    <property type="protein sequence ID" value="CAB43258.1"/>
    <property type="molecule type" value="mRNA"/>
</dbReference>
<dbReference type="CCDS" id="CCDS14066.2"/>
<dbReference type="PIR" id="T08734">
    <property type="entry name" value="T08734"/>
</dbReference>
<dbReference type="RefSeq" id="NP_056468.3">
    <property type="nucleotide sequence ID" value="NM_015653.5"/>
</dbReference>
<dbReference type="RefSeq" id="XP_005261581.1">
    <property type="nucleotide sequence ID" value="XM_005261524.4"/>
</dbReference>
<dbReference type="PDB" id="7UNG">
    <property type="method" value="EM"/>
    <property type="resolution" value="3.60 A"/>
    <property type="chains" value="O/P/Q/R/S=1-382"/>
</dbReference>
<dbReference type="PDB" id="8J07">
    <property type="method" value="EM"/>
    <property type="resolution" value="4.10 A"/>
    <property type="chains" value="5A/5B/5C=1-382"/>
</dbReference>
<dbReference type="PDBsum" id="7UNG"/>
<dbReference type="PDBsum" id="8J07"/>
<dbReference type="EMDB" id="EMD-26624"/>
<dbReference type="EMDB" id="EMD-35888"/>
<dbReference type="SMR" id="Q9H4K1"/>
<dbReference type="BioGRID" id="117581">
    <property type="interactions" value="30"/>
</dbReference>
<dbReference type="FunCoup" id="Q9H4K1">
    <property type="interactions" value="241"/>
</dbReference>
<dbReference type="IntAct" id="Q9H4K1">
    <property type="interactions" value="30"/>
</dbReference>
<dbReference type="MINT" id="Q9H4K1"/>
<dbReference type="STRING" id="9606.ENSP00000483356"/>
<dbReference type="GlyGen" id="Q9H4K1">
    <property type="glycosylation" value="1 site, 1 O-linked glycan (1 site)"/>
</dbReference>
<dbReference type="iPTMnet" id="Q9H4K1"/>
<dbReference type="PhosphoSitePlus" id="Q9H4K1"/>
<dbReference type="BioMuta" id="RIBC2"/>
<dbReference type="DMDM" id="74752644"/>
<dbReference type="jPOST" id="Q9H4K1"/>
<dbReference type="MassIVE" id="Q9H4K1"/>
<dbReference type="PaxDb" id="9606-ENSP00000483356"/>
<dbReference type="PeptideAtlas" id="Q9H4K1"/>
<dbReference type="ProteomicsDB" id="80849"/>
<dbReference type="Antibodypedia" id="303">
    <property type="antibodies" value="99 antibodies from 16 providers"/>
</dbReference>
<dbReference type="DNASU" id="26150"/>
<dbReference type="Ensembl" id="ENST00000614167.2">
    <property type="protein sequence ID" value="ENSP00000483356.1"/>
    <property type="gene ID" value="ENSG00000128408.9"/>
</dbReference>
<dbReference type="GeneID" id="26150"/>
<dbReference type="KEGG" id="hsa:26150"/>
<dbReference type="MANE-Select" id="ENST00000614167.2">
    <property type="protein sequence ID" value="ENSP00000483356.1"/>
    <property type="RefSeq nucleotide sequence ID" value="NM_015653.5"/>
    <property type="RefSeq protein sequence ID" value="NP_056468.3"/>
</dbReference>
<dbReference type="UCSC" id="uc032qrc.2">
    <property type="organism name" value="human"/>
</dbReference>
<dbReference type="AGR" id="HGNC:13241"/>
<dbReference type="CTD" id="26150"/>
<dbReference type="DisGeNET" id="26150"/>
<dbReference type="GeneCards" id="RIBC2"/>
<dbReference type="HGNC" id="HGNC:13241">
    <property type="gene designation" value="RIBC2"/>
</dbReference>
<dbReference type="HPA" id="ENSG00000128408">
    <property type="expression patterns" value="Group enriched (choroid plexus, fallopian tube, testis)"/>
</dbReference>
<dbReference type="MIM" id="621115">
    <property type="type" value="gene"/>
</dbReference>
<dbReference type="neXtProt" id="NX_Q9H4K1"/>
<dbReference type="OpenTargets" id="ENSG00000128408"/>
<dbReference type="PharmGKB" id="PA134967342"/>
<dbReference type="VEuPathDB" id="HostDB:ENSG00000128408"/>
<dbReference type="eggNOG" id="ENOG502QWST">
    <property type="taxonomic scope" value="Eukaryota"/>
</dbReference>
<dbReference type="GeneTree" id="ENSGT00390000010825"/>
<dbReference type="HOGENOM" id="CLU_061822_0_1_1"/>
<dbReference type="InParanoid" id="Q9H4K1"/>
<dbReference type="OMA" id="NLCRAIN"/>
<dbReference type="OrthoDB" id="429119at2759"/>
<dbReference type="PAN-GO" id="Q9H4K1">
    <property type="GO annotations" value="0 GO annotations based on evolutionary models"/>
</dbReference>
<dbReference type="PhylomeDB" id="Q9H4K1"/>
<dbReference type="PathwayCommons" id="Q9H4K1"/>
<dbReference type="SignaLink" id="Q9H4K1"/>
<dbReference type="BioGRID-ORCS" id="26150">
    <property type="hits" value="4 hits in 277 CRISPR screens"/>
</dbReference>
<dbReference type="ChiTaRS" id="RIBC2">
    <property type="organism name" value="human"/>
</dbReference>
<dbReference type="GenomeRNAi" id="26150"/>
<dbReference type="Pharos" id="Q9H4K1">
    <property type="development level" value="Tdark"/>
</dbReference>
<dbReference type="PRO" id="PR:Q9H4K1"/>
<dbReference type="Proteomes" id="UP000005640">
    <property type="component" value="Chromosome 22"/>
</dbReference>
<dbReference type="RNAct" id="Q9H4K1">
    <property type="molecule type" value="protein"/>
</dbReference>
<dbReference type="Bgee" id="ENSG00000128408">
    <property type="expression patterns" value="Expressed in bronchial epithelial cell and 115 other cell types or tissues"/>
</dbReference>
<dbReference type="GO" id="GO:0160111">
    <property type="term" value="C:axonemal A tubule inner sheath"/>
    <property type="evidence" value="ECO:0000250"/>
    <property type="project" value="UniProtKB"/>
</dbReference>
<dbReference type="GO" id="GO:0005879">
    <property type="term" value="C:axonemal microtubule"/>
    <property type="evidence" value="ECO:0000314"/>
    <property type="project" value="UniProtKB"/>
</dbReference>
<dbReference type="GO" id="GO:0005634">
    <property type="term" value="C:nucleus"/>
    <property type="evidence" value="ECO:0007005"/>
    <property type="project" value="UniProtKB"/>
</dbReference>
<dbReference type="GO" id="GO:0036126">
    <property type="term" value="C:sperm flagellum"/>
    <property type="evidence" value="ECO:0000250"/>
    <property type="project" value="UniProtKB"/>
</dbReference>
<dbReference type="GO" id="GO:0030317">
    <property type="term" value="P:flagellated sperm motility"/>
    <property type="evidence" value="ECO:0000250"/>
    <property type="project" value="UniProtKB"/>
</dbReference>
<dbReference type="InterPro" id="IPR008805">
    <property type="entry name" value="RIB43A"/>
</dbReference>
<dbReference type="PANTHER" id="PTHR14517:SF10">
    <property type="entry name" value="RIB43A-LIKE WITH COILED-COILS PROTEIN 2"/>
    <property type="match status" value="1"/>
</dbReference>
<dbReference type="PANTHER" id="PTHR14517">
    <property type="entry name" value="RIB43A-RELATED"/>
    <property type="match status" value="1"/>
</dbReference>
<dbReference type="Pfam" id="PF05914">
    <property type="entry name" value="RIB43A"/>
    <property type="match status" value="1"/>
</dbReference>
<sequence>MGSQTMAVALPRDLRQDANLAKRRHAELCRQKRVFNARNRIIGGDTEAWDVQVHDQKIKEATEKARHETFAAEMRQNDKIMCILENRKKRDRKNLCRAINDFQQSFQKPETRREFDLSDPLALKKDLPARQSDNDVRNTISGMQKFMGEDLNFHERKKFQEEQNREWSLQQQREWKNARAEQKCAEALYTETRLQFDETAKHLQKLESTTRKAVCASVKDFNKSQAIESVERKKQEKKQEQEDNLAEITNLLRGDLLSENPQQAASSFGPHRVVPDRWKGMTQEQLEQIRLVQKQQIQEKLRLQEEKRQRDLDWDRRRIQGARATLLFERQQWRRQRDLRRALDSSNLSLAKEQHLQKKYMNEVYTNQPTGDYFTQFNTGSR</sequence>
<comment type="function">
    <text evidence="5">Microtubule inner protein (MIP) part of the dynein-decorated doublet microtubules (DMTs) in cilia axoneme, which is required for motile cilia beating.</text>
</comment>
<comment type="subunit">
    <text evidence="1">Microtubule inner protein component of sperm flagellar doublet microtubules.</text>
</comment>
<comment type="interaction">
    <interactant intactId="EBI-740128">
        <id>Q9H4K1</id>
    </interactant>
    <interactant intactId="EBI-947916">
        <id>P98164</id>
        <label>LRP2</label>
    </interactant>
    <organismsDiffer>false</organismsDiffer>
    <experiments>2</experiments>
</comment>
<comment type="interaction">
    <interactant intactId="EBI-740128">
        <id>Q9H4K1</id>
    </interactant>
    <interactant intactId="EBI-9675698">
        <id>P14079</id>
        <label>tax</label>
    </interactant>
    <organismsDiffer>true</organismsDiffer>
    <experiments>3</experiments>
</comment>
<comment type="subcellular location">
    <subcellularLocation>
        <location evidence="5">Cytoplasm</location>
        <location evidence="5">Cytoskeleton</location>
        <location evidence="5">Cilium axoneme</location>
    </subcellularLocation>
    <subcellularLocation>
        <location evidence="1">Cytoplasm</location>
        <location evidence="1">Cytoskeleton</location>
        <location evidence="1">Flagellum axoneme</location>
    </subcellularLocation>
</comment>
<comment type="tissue specificity">
    <text evidence="5">Expressed in airway epithelial cells.</text>
</comment>
<comment type="similarity">
    <text evidence="6">Belongs to the RIB43A family.</text>
</comment>
<comment type="sequence caution" evidence="6">
    <conflict type="erroneous initiation">
        <sequence resource="EMBL-CDS" id="AAH03024"/>
    </conflict>
    <text>Truncated N-terminus.</text>
</comment>
<comment type="sequence caution" evidence="6">
    <conflict type="erroneous initiation">
        <sequence resource="EMBL-CDS" id="AAH09904"/>
    </conflict>
    <text>Truncated N-terminus.</text>
</comment>
<comment type="sequence caution" evidence="6">
    <conflict type="erroneous initiation">
        <sequence resource="EMBL-CDS" id="CAC09526"/>
    </conflict>
    <text>Truncated N-terminus.</text>
</comment>
<comment type="sequence caution" evidence="6">
    <conflict type="frameshift">
        <sequence resource="EMBL-CDS" id="CAC09526"/>
    </conflict>
</comment>
<comment type="sequence caution" evidence="6">
    <conflict type="erroneous initiation">
        <sequence resource="EMBL-CDS" id="CAG30324"/>
    </conflict>
    <text>Truncated N-terminus.</text>
</comment>
<keyword id="KW-0002">3D-structure</keyword>
<keyword id="KW-0966">Cell projection</keyword>
<keyword id="KW-0969">Cilium</keyword>
<keyword id="KW-0175">Coiled coil</keyword>
<keyword id="KW-0963">Cytoplasm</keyword>
<keyword id="KW-0206">Cytoskeleton</keyword>
<keyword id="KW-0282">Flagellum</keyword>
<keyword id="KW-1267">Proteomics identification</keyword>
<keyword id="KW-1185">Reference proteome</keyword>
<organism>
    <name type="scientific">Homo sapiens</name>
    <name type="common">Human</name>
    <dbReference type="NCBI Taxonomy" id="9606"/>
    <lineage>
        <taxon>Eukaryota</taxon>
        <taxon>Metazoa</taxon>
        <taxon>Chordata</taxon>
        <taxon>Craniata</taxon>
        <taxon>Vertebrata</taxon>
        <taxon>Euteleostomi</taxon>
        <taxon>Mammalia</taxon>
        <taxon>Eutheria</taxon>
        <taxon>Euarchontoglires</taxon>
        <taxon>Primates</taxon>
        <taxon>Haplorrhini</taxon>
        <taxon>Catarrhini</taxon>
        <taxon>Hominidae</taxon>
        <taxon>Homo</taxon>
    </lineage>
</organism>
<name>RIBC2_HUMAN</name>
<gene>
    <name evidence="7" type="primary">RIBC2</name>
    <name type="synonym">C22orf11</name>
</gene>
<evidence type="ECO:0000250" key="1">
    <source>
        <dbReference type="UniProtKB" id="Q9D4Q1"/>
    </source>
</evidence>
<evidence type="ECO:0000255" key="2"/>
<evidence type="ECO:0000269" key="3">
    <source>
    </source>
</evidence>
<evidence type="ECO:0000269" key="4">
    <source>
    </source>
</evidence>
<evidence type="ECO:0000269" key="5">
    <source>
    </source>
</evidence>
<evidence type="ECO:0000305" key="6"/>
<evidence type="ECO:0000312" key="7">
    <source>
        <dbReference type="HGNC" id="HGNC:13241"/>
    </source>
</evidence>
<evidence type="ECO:0007744" key="8">
    <source>
        <dbReference type="PDB" id="7UNG"/>
    </source>
</evidence>